<reference key="1">
    <citation type="journal article" date="2006" name="Lancet">
        <title>Complete genome sequence of USA300, an epidemic clone of community-acquired meticillin-resistant Staphylococcus aureus.</title>
        <authorList>
            <person name="Diep B.A."/>
            <person name="Gill S.R."/>
            <person name="Chang R.F."/>
            <person name="Phan T.H."/>
            <person name="Chen J.H."/>
            <person name="Davidson M.G."/>
            <person name="Lin F."/>
            <person name="Lin J."/>
            <person name="Carleton H.A."/>
            <person name="Mongodin E.F."/>
            <person name="Sensabaugh G.F."/>
            <person name="Perdreau-Remington F."/>
        </authorList>
    </citation>
    <scope>NUCLEOTIDE SEQUENCE [LARGE SCALE GENOMIC DNA]</scope>
    <source>
        <strain>USA300</strain>
    </source>
</reference>
<dbReference type="EC" id="2.7.1.40"/>
<dbReference type="EMBL" id="CP000255">
    <property type="protein sequence ID" value="ABD22512.1"/>
    <property type="molecule type" value="Genomic_DNA"/>
</dbReference>
<dbReference type="RefSeq" id="WP_001232648.1">
    <property type="nucleotide sequence ID" value="NZ_CP027476.1"/>
</dbReference>
<dbReference type="SMR" id="Q2FG40"/>
<dbReference type="KEGG" id="saa:SAUSA300_1644"/>
<dbReference type="HOGENOM" id="CLU_015439_0_2_9"/>
<dbReference type="OMA" id="RVHHIGE"/>
<dbReference type="UniPathway" id="UPA00109">
    <property type="reaction ID" value="UER00188"/>
</dbReference>
<dbReference type="Proteomes" id="UP000001939">
    <property type="component" value="Chromosome"/>
</dbReference>
<dbReference type="GO" id="GO:0005524">
    <property type="term" value="F:ATP binding"/>
    <property type="evidence" value="ECO:0007669"/>
    <property type="project" value="UniProtKB-KW"/>
</dbReference>
<dbReference type="GO" id="GO:0016301">
    <property type="term" value="F:kinase activity"/>
    <property type="evidence" value="ECO:0007669"/>
    <property type="project" value="UniProtKB-KW"/>
</dbReference>
<dbReference type="GO" id="GO:0000287">
    <property type="term" value="F:magnesium ion binding"/>
    <property type="evidence" value="ECO:0007669"/>
    <property type="project" value="InterPro"/>
</dbReference>
<dbReference type="GO" id="GO:0030955">
    <property type="term" value="F:potassium ion binding"/>
    <property type="evidence" value="ECO:0007669"/>
    <property type="project" value="InterPro"/>
</dbReference>
<dbReference type="GO" id="GO:0004743">
    <property type="term" value="F:pyruvate kinase activity"/>
    <property type="evidence" value="ECO:0007669"/>
    <property type="project" value="UniProtKB-EC"/>
</dbReference>
<dbReference type="FunFam" id="2.40.33.10:FF:000001">
    <property type="entry name" value="Pyruvate kinase"/>
    <property type="match status" value="1"/>
</dbReference>
<dbReference type="FunFam" id="3.20.20.60:FF:000001">
    <property type="entry name" value="Pyruvate kinase"/>
    <property type="match status" value="1"/>
</dbReference>
<dbReference type="FunFam" id="3.40.1380.20:FF:000017">
    <property type="entry name" value="Pyruvate kinase"/>
    <property type="match status" value="1"/>
</dbReference>
<dbReference type="Gene3D" id="3.20.20.60">
    <property type="entry name" value="Phosphoenolpyruvate-binding domains"/>
    <property type="match status" value="1"/>
</dbReference>
<dbReference type="Gene3D" id="3.50.30.10">
    <property type="entry name" value="Phosphohistidine domain"/>
    <property type="match status" value="1"/>
</dbReference>
<dbReference type="Gene3D" id="2.40.33.10">
    <property type="entry name" value="PK beta-barrel domain-like"/>
    <property type="match status" value="1"/>
</dbReference>
<dbReference type="Gene3D" id="3.40.1380.20">
    <property type="entry name" value="Pyruvate kinase, C-terminal domain"/>
    <property type="match status" value="1"/>
</dbReference>
<dbReference type="InterPro" id="IPR008279">
    <property type="entry name" value="PEP-util_enz_mobile_dom"/>
</dbReference>
<dbReference type="InterPro" id="IPR036637">
    <property type="entry name" value="Phosphohistidine_dom_sf"/>
</dbReference>
<dbReference type="InterPro" id="IPR001697">
    <property type="entry name" value="Pyr_Knase"/>
</dbReference>
<dbReference type="InterPro" id="IPR015813">
    <property type="entry name" value="Pyrv/PenolPyrv_kinase-like_dom"/>
</dbReference>
<dbReference type="InterPro" id="IPR040442">
    <property type="entry name" value="Pyrv_kinase-like_dom_sf"/>
</dbReference>
<dbReference type="InterPro" id="IPR011037">
    <property type="entry name" value="Pyrv_Knase-like_insert_dom_sf"/>
</dbReference>
<dbReference type="InterPro" id="IPR015793">
    <property type="entry name" value="Pyrv_Knase_brl"/>
</dbReference>
<dbReference type="InterPro" id="IPR015795">
    <property type="entry name" value="Pyrv_Knase_C"/>
</dbReference>
<dbReference type="InterPro" id="IPR036918">
    <property type="entry name" value="Pyrv_Knase_C_sf"/>
</dbReference>
<dbReference type="InterPro" id="IPR015806">
    <property type="entry name" value="Pyrv_Knase_insert_dom_sf"/>
</dbReference>
<dbReference type="NCBIfam" id="NF004491">
    <property type="entry name" value="PRK05826.1"/>
    <property type="match status" value="1"/>
</dbReference>
<dbReference type="NCBIfam" id="NF004978">
    <property type="entry name" value="PRK06354.1"/>
    <property type="match status" value="1"/>
</dbReference>
<dbReference type="NCBIfam" id="TIGR01064">
    <property type="entry name" value="pyruv_kin"/>
    <property type="match status" value="1"/>
</dbReference>
<dbReference type="PANTHER" id="PTHR11817">
    <property type="entry name" value="PYRUVATE KINASE"/>
    <property type="match status" value="1"/>
</dbReference>
<dbReference type="Pfam" id="PF00391">
    <property type="entry name" value="PEP-utilizers"/>
    <property type="match status" value="1"/>
</dbReference>
<dbReference type="Pfam" id="PF00224">
    <property type="entry name" value="PK"/>
    <property type="match status" value="1"/>
</dbReference>
<dbReference type="Pfam" id="PF02887">
    <property type="entry name" value="PK_C"/>
    <property type="match status" value="1"/>
</dbReference>
<dbReference type="PRINTS" id="PR01050">
    <property type="entry name" value="PYRUVTKNASE"/>
</dbReference>
<dbReference type="SUPFAM" id="SSF51621">
    <property type="entry name" value="Phosphoenolpyruvate/pyruvate domain"/>
    <property type="match status" value="1"/>
</dbReference>
<dbReference type="SUPFAM" id="SSF52009">
    <property type="entry name" value="Phosphohistidine domain"/>
    <property type="match status" value="1"/>
</dbReference>
<dbReference type="SUPFAM" id="SSF50800">
    <property type="entry name" value="PK beta-barrel domain-like"/>
    <property type="match status" value="1"/>
</dbReference>
<dbReference type="SUPFAM" id="SSF52935">
    <property type="entry name" value="PK C-terminal domain-like"/>
    <property type="match status" value="1"/>
</dbReference>
<gene>
    <name type="primary">pyk</name>
    <name type="ordered locus">SAUSA300_1644</name>
</gene>
<proteinExistence type="inferred from homology"/>
<keyword id="KW-0067">ATP-binding</keyword>
<keyword id="KW-0324">Glycolysis</keyword>
<keyword id="KW-0418">Kinase</keyword>
<keyword id="KW-0460">Magnesium</keyword>
<keyword id="KW-0479">Metal-binding</keyword>
<keyword id="KW-0547">Nucleotide-binding</keyword>
<keyword id="KW-0630">Potassium</keyword>
<keyword id="KW-0670">Pyruvate</keyword>
<keyword id="KW-0808">Transferase</keyword>
<organism>
    <name type="scientific">Staphylococcus aureus (strain USA300)</name>
    <dbReference type="NCBI Taxonomy" id="367830"/>
    <lineage>
        <taxon>Bacteria</taxon>
        <taxon>Bacillati</taxon>
        <taxon>Bacillota</taxon>
        <taxon>Bacilli</taxon>
        <taxon>Bacillales</taxon>
        <taxon>Staphylococcaceae</taxon>
        <taxon>Staphylococcus</taxon>
    </lineage>
</organism>
<feature type="chain" id="PRO_0000294136" description="Pyruvate kinase">
    <location>
        <begin position="1"/>
        <end position="585"/>
    </location>
</feature>
<feature type="binding site" evidence="1">
    <location>
        <position position="32"/>
    </location>
    <ligand>
        <name>substrate</name>
    </ligand>
</feature>
<feature type="binding site" evidence="2">
    <location>
        <begin position="34"/>
        <end position="37"/>
    </location>
    <ligand>
        <name>ATP</name>
        <dbReference type="ChEBI" id="CHEBI:30616"/>
    </ligand>
</feature>
<feature type="binding site" evidence="1">
    <location>
        <position position="34"/>
    </location>
    <ligand>
        <name>K(+)</name>
        <dbReference type="ChEBI" id="CHEBI:29103"/>
    </ligand>
</feature>
<feature type="binding site" evidence="1">
    <location>
        <position position="36"/>
    </location>
    <ligand>
        <name>K(+)</name>
        <dbReference type="ChEBI" id="CHEBI:29103"/>
    </ligand>
</feature>
<feature type="binding site" evidence="1">
    <location>
        <position position="66"/>
    </location>
    <ligand>
        <name>K(+)</name>
        <dbReference type="ChEBI" id="CHEBI:29103"/>
    </ligand>
</feature>
<feature type="binding site" evidence="1">
    <location>
        <position position="67"/>
    </location>
    <ligand>
        <name>K(+)</name>
        <dbReference type="ChEBI" id="CHEBI:29103"/>
    </ligand>
</feature>
<feature type="binding site" evidence="2">
    <location>
        <position position="73"/>
    </location>
    <ligand>
        <name>ATP</name>
        <dbReference type="ChEBI" id="CHEBI:30616"/>
    </ligand>
</feature>
<feature type="binding site" evidence="2">
    <location>
        <position position="156"/>
    </location>
    <ligand>
        <name>ATP</name>
        <dbReference type="ChEBI" id="CHEBI:30616"/>
    </ligand>
</feature>
<feature type="binding site" evidence="1">
    <location>
        <position position="221"/>
    </location>
    <ligand>
        <name>Mg(2+)</name>
        <dbReference type="ChEBI" id="CHEBI:18420"/>
    </ligand>
</feature>
<feature type="binding site" evidence="1">
    <location>
        <position position="244"/>
    </location>
    <ligand>
        <name>substrate</name>
    </ligand>
</feature>
<feature type="binding site" evidence="1">
    <location>
        <position position="245"/>
    </location>
    <ligand>
        <name>Mg(2+)</name>
        <dbReference type="ChEBI" id="CHEBI:18420"/>
    </ligand>
</feature>
<feature type="binding site" evidence="1">
    <location>
        <position position="245"/>
    </location>
    <ligand>
        <name>substrate</name>
    </ligand>
</feature>
<feature type="binding site" evidence="1">
    <location>
        <position position="277"/>
    </location>
    <ligand>
        <name>substrate</name>
    </ligand>
</feature>
<feature type="site" description="Transition state stabilizer" evidence="1">
    <location>
        <position position="219"/>
    </location>
</feature>
<name>KPYK_STAA3</name>
<sequence>MRKTKIVCTIGPASESEEMIEKLINAGMNVARLNFSHGSHEEHKGRIDTIRKVAKRLDKIVAILLDTKGPEIRTHNMKDGIIELERGNEVIVSMNEVEGTPEKFSVTYENLINDVQVGSYILLDDGLIELQVKDIDHAKKEVKCDILNSGELKNKKGVNLPGVRVSLPGITEKDAEDIRFGIKENVDFIAASFVRRPSDVLEIREILEEQKANISVFPKIENQEGIDNIAEILEVSDGLMVARGDMGVEIPPEKVPMVQKDLIRQCNKLGKPVITATQMLDSMQRNPRATRAEASDVANAIYDGTDAVMLSGETAAGLYPEEAVKTMRNIAVSAEAAQDYKKLLSDRTKLVETSLVNAIGISVAHTALNLNVKAIVAATESGSTARTISKYRPHSDIIAVTPSEETARQCSIVWGVQPVVKKGRKSTDALLNNAVATAVETGRVSNGDLIIITAGVPTGETGTTNMMKIHLVGDEIANGQGIGRGSVVGTTLVAETVKDLEGKDLSDKVIVTNSIDETFVPYVEKALGLITEENGITSPSAIVGLEKGIPTVVGVEKAVKNISNNMLVTIDAAQGKIFEGYANVL</sequence>
<comment type="catalytic activity">
    <reaction>
        <text>pyruvate + ATP = phosphoenolpyruvate + ADP + H(+)</text>
        <dbReference type="Rhea" id="RHEA:18157"/>
        <dbReference type="ChEBI" id="CHEBI:15361"/>
        <dbReference type="ChEBI" id="CHEBI:15378"/>
        <dbReference type="ChEBI" id="CHEBI:30616"/>
        <dbReference type="ChEBI" id="CHEBI:58702"/>
        <dbReference type="ChEBI" id="CHEBI:456216"/>
        <dbReference type="EC" id="2.7.1.40"/>
    </reaction>
</comment>
<comment type="cofactor">
    <cofactor evidence="1">
        <name>Mg(2+)</name>
        <dbReference type="ChEBI" id="CHEBI:18420"/>
    </cofactor>
</comment>
<comment type="cofactor">
    <cofactor evidence="1">
        <name>K(+)</name>
        <dbReference type="ChEBI" id="CHEBI:29103"/>
    </cofactor>
</comment>
<comment type="pathway">
    <text>Carbohydrate degradation; glycolysis; pyruvate from D-glyceraldehyde 3-phosphate: step 5/5.</text>
</comment>
<comment type="similarity">
    <text evidence="3">Belongs to the pyruvate kinase family.</text>
</comment>
<comment type="similarity">
    <text evidence="3">In the C-terminal section; belongs to the PEP-utilizing enzyme family.</text>
</comment>
<protein>
    <recommendedName>
        <fullName>Pyruvate kinase</fullName>
        <shortName>PK</shortName>
        <ecNumber>2.7.1.40</ecNumber>
    </recommendedName>
</protein>
<accession>Q2FG40</accession>
<evidence type="ECO:0000250" key="1"/>
<evidence type="ECO:0000250" key="2">
    <source>
        <dbReference type="UniProtKB" id="P14618"/>
    </source>
</evidence>
<evidence type="ECO:0000305" key="3"/>